<evidence type="ECO:0000255" key="1">
    <source>
        <dbReference type="PROSITE-ProRule" id="PRU01026"/>
    </source>
</evidence>
<evidence type="ECO:0000256" key="2">
    <source>
        <dbReference type="SAM" id="MobiDB-lite"/>
    </source>
</evidence>
<feature type="chain" id="PRO_0000101666" description="rRNA adenine N-6-methyltransferase">
    <location>
        <begin position="1"/>
        <end position="340"/>
    </location>
</feature>
<feature type="region of interest" description="Disordered" evidence="2">
    <location>
        <begin position="1"/>
        <end position="37"/>
    </location>
</feature>
<feature type="region of interest" description="Disordered" evidence="2">
    <location>
        <begin position="284"/>
        <end position="340"/>
    </location>
</feature>
<feature type="compositionally biased region" description="Low complexity" evidence="2">
    <location>
        <begin position="1"/>
        <end position="25"/>
    </location>
</feature>
<feature type="compositionally biased region" description="Gly residues" evidence="2">
    <location>
        <begin position="301"/>
        <end position="314"/>
    </location>
</feature>
<feature type="compositionally biased region" description="Basic and acidic residues" evidence="2">
    <location>
        <begin position="315"/>
        <end position="329"/>
    </location>
</feature>
<feature type="binding site" evidence="1">
    <location>
        <position position="38"/>
    </location>
    <ligand>
        <name>S-adenosyl-L-methionine</name>
        <dbReference type="ChEBI" id="CHEBI:59789"/>
    </ligand>
</feature>
<feature type="binding site" evidence="1">
    <location>
        <position position="40"/>
    </location>
    <ligand>
        <name>S-adenosyl-L-methionine</name>
        <dbReference type="ChEBI" id="CHEBI:59789"/>
    </ligand>
</feature>
<feature type="binding site" evidence="1">
    <location>
        <position position="65"/>
    </location>
    <ligand>
        <name>S-adenosyl-L-methionine</name>
        <dbReference type="ChEBI" id="CHEBI:59789"/>
    </ligand>
</feature>
<feature type="binding site" evidence="1">
    <location>
        <position position="86"/>
    </location>
    <ligand>
        <name>S-adenosyl-L-methionine</name>
        <dbReference type="ChEBI" id="CHEBI:59789"/>
    </ligand>
</feature>
<feature type="binding site" evidence="1">
    <location>
        <position position="111"/>
    </location>
    <ligand>
        <name>S-adenosyl-L-methionine</name>
        <dbReference type="ChEBI" id="CHEBI:59789"/>
    </ligand>
</feature>
<feature type="binding site" evidence="1">
    <location>
        <position position="127"/>
    </location>
    <ligand>
        <name>S-adenosyl-L-methionine</name>
        <dbReference type="ChEBI" id="CHEBI:59789"/>
    </ligand>
</feature>
<name>ERMA_AERER</name>
<gene>
    <name type="primary">ermA</name>
</gene>
<keyword id="KW-0046">Antibiotic resistance</keyword>
<keyword id="KW-0489">Methyltransferase</keyword>
<keyword id="KW-0694">RNA-binding</keyword>
<keyword id="KW-0949">S-adenosyl-L-methionine</keyword>
<keyword id="KW-0808">Transferase</keyword>
<sequence length="340" mass="37453">MAGPQDRPRGRGPSSGRPQRPVGGRSQRDRDRRVLGQNFLRDPATIRRIADAADVDPDGLVVEAGPGEGLLTRELARRAGRVRTYELDQRLARRLSTDLAQETSIEVVHADFLTAPHPEEPFQFVGAIPYGITSAIVDWCLTAPTLTSATLVTQQEFARKRTGDYGRWTALTVTTWPTFEWQYVAKVDRTLFTPVPRVHSAIMRLRRRPQPLLRDAAARSRFADMVEIGFVGKGGSLYRSLTREWPRSKVDSAFARADVHHDEIVAFVHPDQWITLFQLLDGSRGGAARGPGDQRGRRGRPGGGPRPDGRAGGGPRRDAGGRRTGDGRGGRPRPPRGGQA</sequence>
<proteinExistence type="inferred from homology"/>
<dbReference type="EC" id="2.1.1.-" evidence="1"/>
<dbReference type="EMBL" id="M11276">
    <property type="protein sequence ID" value="AAA22075.1"/>
    <property type="molecule type" value="Genomic_DNA"/>
</dbReference>
<dbReference type="SMR" id="P09891"/>
<dbReference type="CARD" id="ARO:3000594">
    <property type="molecule name" value="ErmR"/>
    <property type="mechanism identifier" value="ARO:0001001"/>
    <property type="mechanism name" value="antibiotic target alteration"/>
</dbReference>
<dbReference type="KEGG" id="ag:AAA22075"/>
<dbReference type="GO" id="GO:0005829">
    <property type="term" value="C:cytosol"/>
    <property type="evidence" value="ECO:0007669"/>
    <property type="project" value="TreeGrafter"/>
</dbReference>
<dbReference type="GO" id="GO:0003723">
    <property type="term" value="F:RNA binding"/>
    <property type="evidence" value="ECO:0007669"/>
    <property type="project" value="UniProtKB-KW"/>
</dbReference>
<dbReference type="GO" id="GO:0000179">
    <property type="term" value="F:rRNA (adenine-N6,N6-)-dimethyltransferase activity"/>
    <property type="evidence" value="ECO:0007669"/>
    <property type="project" value="InterPro"/>
</dbReference>
<dbReference type="GO" id="GO:0046677">
    <property type="term" value="P:response to antibiotic"/>
    <property type="evidence" value="ECO:0007669"/>
    <property type="project" value="UniProtKB-KW"/>
</dbReference>
<dbReference type="CDD" id="cd02440">
    <property type="entry name" value="AdoMet_MTases"/>
    <property type="match status" value="1"/>
</dbReference>
<dbReference type="Gene3D" id="1.10.8.100">
    <property type="entry name" value="Ribosomal RNA adenine dimethylase-like, domain 2"/>
    <property type="match status" value="1"/>
</dbReference>
<dbReference type="Gene3D" id="3.40.50.150">
    <property type="entry name" value="Vaccinia Virus protein VP39"/>
    <property type="match status" value="1"/>
</dbReference>
<dbReference type="InterPro" id="IPR001737">
    <property type="entry name" value="KsgA/Erm"/>
</dbReference>
<dbReference type="InterPro" id="IPR023165">
    <property type="entry name" value="rRNA_Ade_diMease-like_C"/>
</dbReference>
<dbReference type="InterPro" id="IPR020596">
    <property type="entry name" value="rRNA_Ade_Mease_Trfase_CS"/>
</dbReference>
<dbReference type="InterPro" id="IPR020598">
    <property type="entry name" value="rRNA_Ade_methylase_Trfase_N"/>
</dbReference>
<dbReference type="InterPro" id="IPR029063">
    <property type="entry name" value="SAM-dependent_MTases_sf"/>
</dbReference>
<dbReference type="NCBIfam" id="NF000499">
    <property type="entry name" value="Erm23S_rRNA_broad"/>
    <property type="match status" value="1"/>
</dbReference>
<dbReference type="NCBIfam" id="NF000337">
    <property type="entry name" value="erm_SHROVE"/>
    <property type="match status" value="1"/>
</dbReference>
<dbReference type="PANTHER" id="PTHR11727">
    <property type="entry name" value="DIMETHYLADENOSINE TRANSFERASE"/>
    <property type="match status" value="1"/>
</dbReference>
<dbReference type="PANTHER" id="PTHR11727:SF7">
    <property type="entry name" value="DIMETHYLADENOSINE TRANSFERASE-RELATED"/>
    <property type="match status" value="1"/>
</dbReference>
<dbReference type="Pfam" id="PF00398">
    <property type="entry name" value="RrnaAD"/>
    <property type="match status" value="1"/>
</dbReference>
<dbReference type="SMART" id="SM00650">
    <property type="entry name" value="rADc"/>
    <property type="match status" value="1"/>
</dbReference>
<dbReference type="SUPFAM" id="SSF53335">
    <property type="entry name" value="S-adenosyl-L-methionine-dependent methyltransferases"/>
    <property type="match status" value="1"/>
</dbReference>
<dbReference type="PROSITE" id="PS01131">
    <property type="entry name" value="RRNA_A_DIMETH"/>
    <property type="match status" value="1"/>
</dbReference>
<dbReference type="PROSITE" id="PS51689">
    <property type="entry name" value="SAM_RNA_A_N6_MT"/>
    <property type="match status" value="1"/>
</dbReference>
<protein>
    <recommendedName>
        <fullName>rRNA adenine N-6-methyltransferase</fullName>
        <ecNumber evidence="1">2.1.1.-</ecNumber>
    </recommendedName>
    <alternativeName>
        <fullName>Erythromycin resistance protein</fullName>
    </alternativeName>
    <alternativeName>
        <fullName>Macrolide-lincosamide-streptogramin B resistance protein</fullName>
    </alternativeName>
</protein>
<reference key="1">
    <citation type="journal article" date="1985" name="Gene">
        <title>An erythromycin-resistance gene from an erythromycin-producing strain of Arthrobacter sp.</title>
        <authorList>
            <person name="Roberts A.N."/>
            <person name="Hudson G.S."/>
            <person name="Brenner S."/>
        </authorList>
    </citation>
    <scope>NUCLEOTIDE SEQUENCE [GENOMIC DNA]</scope>
</reference>
<organism>
    <name type="scientific">Aeromicrobium erythreum (strain ATCC 51598 / DSM 8599 / JCM 8359 / NBRC 15406 / NRRL B-3381)</name>
    <dbReference type="NCBI Taxonomy" id="31956"/>
    <lineage>
        <taxon>Bacteria</taxon>
        <taxon>Bacillati</taxon>
        <taxon>Actinomycetota</taxon>
        <taxon>Actinomycetes</taxon>
        <taxon>Propionibacteriales</taxon>
        <taxon>Nocardioidaceae</taxon>
        <taxon>Aeromicrobium</taxon>
    </lineage>
</organism>
<comment type="function">
    <text>Involved in erythromycin resistance.</text>
</comment>
<comment type="similarity">
    <text evidence="1">Belongs to the class I-like SAM-binding methyltransferase superfamily. rRNA adenine N(6)-methyltransferase family.</text>
</comment>
<accession>P09891</accession>